<keyword id="KW-1185">Reference proteome</keyword>
<proteinExistence type="predicted"/>
<dbReference type="EMBL" id="L42023">
    <property type="protein sequence ID" value="AAC22316.1"/>
    <property type="molecule type" value="Genomic_DNA"/>
</dbReference>
<dbReference type="RefSeq" id="NP_438817.1">
    <property type="nucleotide sequence ID" value="NC_000907.1"/>
</dbReference>
<dbReference type="SMR" id="P46494"/>
<dbReference type="STRING" id="71421.HI_0656.1"/>
<dbReference type="EnsemblBacteria" id="AAC22316">
    <property type="protein sequence ID" value="AAC22316"/>
    <property type="gene ID" value="HI_0656.1"/>
</dbReference>
<dbReference type="KEGG" id="hin:HI_0656.1"/>
<dbReference type="PATRIC" id="fig|71421.8.peg.686"/>
<dbReference type="eggNOG" id="COG0551">
    <property type="taxonomic scope" value="Bacteria"/>
</dbReference>
<dbReference type="HOGENOM" id="CLU_104661_0_0_6"/>
<dbReference type="OrthoDB" id="6412825at2"/>
<dbReference type="PhylomeDB" id="P46494"/>
<dbReference type="BioCyc" id="HINF71421:G1GJ1-692-MONOMER"/>
<dbReference type="Proteomes" id="UP000000579">
    <property type="component" value="Chromosome"/>
</dbReference>
<dbReference type="GO" id="GO:0005694">
    <property type="term" value="C:chromosome"/>
    <property type="evidence" value="ECO:0007669"/>
    <property type="project" value="InterPro"/>
</dbReference>
<dbReference type="GO" id="GO:0003677">
    <property type="term" value="F:DNA binding"/>
    <property type="evidence" value="ECO:0007669"/>
    <property type="project" value="InterPro"/>
</dbReference>
<dbReference type="GO" id="GO:0003917">
    <property type="term" value="F:DNA topoisomerase type I (single strand cut, ATP-independent) activity"/>
    <property type="evidence" value="ECO:0007669"/>
    <property type="project" value="InterPro"/>
</dbReference>
<dbReference type="GO" id="GO:0006265">
    <property type="term" value="P:DNA topological change"/>
    <property type="evidence" value="ECO:0007669"/>
    <property type="project" value="InterPro"/>
</dbReference>
<dbReference type="Gene3D" id="3.30.65.10">
    <property type="entry name" value="Bacterial Topoisomerase I, domain 1"/>
    <property type="match status" value="3"/>
</dbReference>
<dbReference type="InterPro" id="IPR000380">
    <property type="entry name" value="Topo_IA"/>
</dbReference>
<dbReference type="InterPro" id="IPR013498">
    <property type="entry name" value="Topo_IA_Znf"/>
</dbReference>
<dbReference type="PANTHER" id="PTHR42785:SF1">
    <property type="entry name" value="DNA TOPOISOMERASE"/>
    <property type="match status" value="1"/>
</dbReference>
<dbReference type="PANTHER" id="PTHR42785">
    <property type="entry name" value="DNA TOPOISOMERASE, TYPE IA, CORE"/>
    <property type="match status" value="1"/>
</dbReference>
<dbReference type="Pfam" id="PF01396">
    <property type="entry name" value="Zn_ribbon_Top1"/>
    <property type="match status" value="3"/>
</dbReference>
<dbReference type="SUPFAM" id="SSF57783">
    <property type="entry name" value="Zinc beta-ribbon"/>
    <property type="match status" value="3"/>
</dbReference>
<evidence type="ECO:0000305" key="1"/>
<comment type="similarity">
    <text evidence="1">To E.coli YrdD.</text>
</comment>
<reference key="1">
    <citation type="journal article" date="1995" name="Science">
        <title>Whole-genome random sequencing and assembly of Haemophilus influenzae Rd.</title>
        <authorList>
            <person name="Fleischmann R.D."/>
            <person name="Adams M.D."/>
            <person name="White O."/>
            <person name="Clayton R.A."/>
            <person name="Kirkness E.F."/>
            <person name="Kerlavage A.R."/>
            <person name="Bult C.J."/>
            <person name="Tomb J.-F."/>
            <person name="Dougherty B.A."/>
            <person name="Merrick J.M."/>
            <person name="McKenney K."/>
            <person name="Sutton G.G."/>
            <person name="FitzHugh W."/>
            <person name="Fields C.A."/>
            <person name="Gocayne J.D."/>
            <person name="Scott J.D."/>
            <person name="Shirley R."/>
            <person name="Liu L.-I."/>
            <person name="Glodek A."/>
            <person name="Kelley J.M."/>
            <person name="Weidman J.F."/>
            <person name="Phillips C.A."/>
            <person name="Spriggs T."/>
            <person name="Hedblom E."/>
            <person name="Cotton M.D."/>
            <person name="Utterback T.R."/>
            <person name="Hanna M.C."/>
            <person name="Nguyen D.T."/>
            <person name="Saudek D.M."/>
            <person name="Brandon R.C."/>
            <person name="Fine L.D."/>
            <person name="Fritchman J.L."/>
            <person name="Fuhrmann J.L."/>
            <person name="Geoghagen N.S.M."/>
            <person name="Gnehm C.L."/>
            <person name="McDonald L.A."/>
            <person name="Small K.V."/>
            <person name="Fraser C.M."/>
            <person name="Smith H.O."/>
            <person name="Venter J.C."/>
        </authorList>
    </citation>
    <scope>NUCLEOTIDE SEQUENCE [LARGE SCALE GENOMIC DNA]</scope>
    <source>
        <strain>ATCC 51907 / DSM 11121 / KW20 / Rd</strain>
    </source>
</reference>
<gene>
    <name type="ordered locus">HI_0656.1</name>
</gene>
<protein>
    <recommendedName>
        <fullName>Uncharacterized protein HI_0656.1</fullName>
    </recommendedName>
</protein>
<feature type="chain" id="PRO_0000169507" description="Uncharacterized protein HI_0656.1">
    <location>
        <begin position="1"/>
        <end position="178"/>
    </location>
</feature>
<organism>
    <name type="scientific">Haemophilus influenzae (strain ATCC 51907 / DSM 11121 / KW20 / Rd)</name>
    <dbReference type="NCBI Taxonomy" id="71421"/>
    <lineage>
        <taxon>Bacteria</taxon>
        <taxon>Pseudomonadati</taxon>
        <taxon>Pseudomonadota</taxon>
        <taxon>Gammaproteobacteria</taxon>
        <taxon>Pasteurellales</taxon>
        <taxon>Pasteurellaceae</taxon>
        <taxon>Haemophilus</taxon>
    </lineage>
</organism>
<accession>P46494</accession>
<sequence>MNQSLFHHSKQQEYCPQCGAPLQIKQGKKGLFLGCSAYPECDYLRPLQRSEHKVLKTLDEICPKCGNLLQLKQGSFGMFIGCSHYPECDFVVREESESEEKITCPECKTGHLISRRGRQGKIFYGCDNFPKCKFSLPAKPYSVPCPTCHFPLSLLKSEDGEKQIFQCANKTCRHIFEQ</sequence>
<name>Y656A_HAEIN</name>